<keyword id="KW-0963">Cytoplasm</keyword>
<keyword id="KW-0275">Fatty acid biosynthesis</keyword>
<keyword id="KW-0276">Fatty acid metabolism</keyword>
<keyword id="KW-0444">Lipid biosynthesis</keyword>
<keyword id="KW-0443">Lipid metabolism</keyword>
<keyword id="KW-0460">Magnesium</keyword>
<keyword id="KW-0479">Metal-binding</keyword>
<keyword id="KW-0808">Transferase</keyword>
<name>ACPS_MARMS</name>
<organism>
    <name type="scientific">Marinomonas sp. (strain MWYL1)</name>
    <dbReference type="NCBI Taxonomy" id="400668"/>
    <lineage>
        <taxon>Bacteria</taxon>
        <taxon>Pseudomonadati</taxon>
        <taxon>Pseudomonadota</taxon>
        <taxon>Gammaproteobacteria</taxon>
        <taxon>Oceanospirillales</taxon>
        <taxon>Oceanospirillaceae</taxon>
        <taxon>Marinomonas</taxon>
    </lineage>
</organism>
<reference key="1">
    <citation type="submission" date="2007-06" db="EMBL/GenBank/DDBJ databases">
        <title>Complete sequence of Marinomonas sp. MWYL1.</title>
        <authorList>
            <consortium name="US DOE Joint Genome Institute"/>
            <person name="Copeland A."/>
            <person name="Lucas S."/>
            <person name="Lapidus A."/>
            <person name="Barry K."/>
            <person name="Glavina del Rio T."/>
            <person name="Dalin E."/>
            <person name="Tice H."/>
            <person name="Pitluck S."/>
            <person name="Kiss H."/>
            <person name="Brettin T."/>
            <person name="Bruce D."/>
            <person name="Detter J.C."/>
            <person name="Han C."/>
            <person name="Schmutz J."/>
            <person name="Larimer F."/>
            <person name="Land M."/>
            <person name="Hauser L."/>
            <person name="Kyrpides N."/>
            <person name="Kim E."/>
            <person name="Johnston A.W.B."/>
            <person name="Todd J.D."/>
            <person name="Rogers R."/>
            <person name="Wexler M."/>
            <person name="Bond P.L."/>
            <person name="Li Y."/>
            <person name="Richardson P."/>
        </authorList>
    </citation>
    <scope>NUCLEOTIDE SEQUENCE [LARGE SCALE GENOMIC DNA]</scope>
    <source>
        <strain>MWYL1</strain>
    </source>
</reference>
<evidence type="ECO:0000255" key="1">
    <source>
        <dbReference type="HAMAP-Rule" id="MF_00101"/>
    </source>
</evidence>
<proteinExistence type="inferred from homology"/>
<protein>
    <recommendedName>
        <fullName evidence="1">Holo-[acyl-carrier-protein] synthase</fullName>
        <shortName evidence="1">Holo-ACP synthase</shortName>
        <ecNumber evidence="1">2.7.8.7</ecNumber>
    </recommendedName>
    <alternativeName>
        <fullName evidence="1">4'-phosphopantetheinyl transferase AcpS</fullName>
    </alternativeName>
</protein>
<sequence>MIIGVGTDLVEIARIAQSIERLGERFIDRILTAAEKERWSEISNLEKANSFVAKRFAAKEAAVKALGTGIGLGVSFQHFNVSNLPSGQPVLTVDESIIARYDFPVSWHLSLTDEKAYAQAFVILESK</sequence>
<dbReference type="EC" id="2.7.8.7" evidence="1"/>
<dbReference type="EMBL" id="CP000749">
    <property type="protein sequence ID" value="ABR70178.1"/>
    <property type="molecule type" value="Genomic_DNA"/>
</dbReference>
<dbReference type="SMR" id="A6VUP9"/>
<dbReference type="STRING" id="400668.Mmwyl1_1249"/>
<dbReference type="KEGG" id="mmw:Mmwyl1_1249"/>
<dbReference type="eggNOG" id="COG0736">
    <property type="taxonomic scope" value="Bacteria"/>
</dbReference>
<dbReference type="HOGENOM" id="CLU_089696_3_1_6"/>
<dbReference type="OrthoDB" id="517356at2"/>
<dbReference type="GO" id="GO:0005737">
    <property type="term" value="C:cytoplasm"/>
    <property type="evidence" value="ECO:0007669"/>
    <property type="project" value="UniProtKB-SubCell"/>
</dbReference>
<dbReference type="GO" id="GO:0008897">
    <property type="term" value="F:holo-[acyl-carrier-protein] synthase activity"/>
    <property type="evidence" value="ECO:0007669"/>
    <property type="project" value="UniProtKB-UniRule"/>
</dbReference>
<dbReference type="GO" id="GO:0000287">
    <property type="term" value="F:magnesium ion binding"/>
    <property type="evidence" value="ECO:0007669"/>
    <property type="project" value="UniProtKB-UniRule"/>
</dbReference>
<dbReference type="GO" id="GO:0006633">
    <property type="term" value="P:fatty acid biosynthetic process"/>
    <property type="evidence" value="ECO:0007669"/>
    <property type="project" value="UniProtKB-UniRule"/>
</dbReference>
<dbReference type="Gene3D" id="3.90.470.20">
    <property type="entry name" value="4'-phosphopantetheinyl transferase domain"/>
    <property type="match status" value="1"/>
</dbReference>
<dbReference type="HAMAP" id="MF_00101">
    <property type="entry name" value="AcpS"/>
    <property type="match status" value="1"/>
</dbReference>
<dbReference type="InterPro" id="IPR008278">
    <property type="entry name" value="4-PPantetheinyl_Trfase_dom"/>
</dbReference>
<dbReference type="InterPro" id="IPR037143">
    <property type="entry name" value="4-PPantetheinyl_Trfase_dom_sf"/>
</dbReference>
<dbReference type="InterPro" id="IPR002582">
    <property type="entry name" value="ACPS"/>
</dbReference>
<dbReference type="InterPro" id="IPR004568">
    <property type="entry name" value="Ppantetheine-prot_Trfase_dom"/>
</dbReference>
<dbReference type="NCBIfam" id="TIGR00516">
    <property type="entry name" value="acpS"/>
    <property type="match status" value="1"/>
</dbReference>
<dbReference type="NCBIfam" id="TIGR00556">
    <property type="entry name" value="pantethn_trn"/>
    <property type="match status" value="1"/>
</dbReference>
<dbReference type="Pfam" id="PF01648">
    <property type="entry name" value="ACPS"/>
    <property type="match status" value="1"/>
</dbReference>
<dbReference type="SUPFAM" id="SSF56214">
    <property type="entry name" value="4'-phosphopantetheinyl transferase"/>
    <property type="match status" value="1"/>
</dbReference>
<feature type="chain" id="PRO_1000075644" description="Holo-[acyl-carrier-protein] synthase">
    <location>
        <begin position="1"/>
        <end position="127"/>
    </location>
</feature>
<feature type="binding site" evidence="1">
    <location>
        <position position="8"/>
    </location>
    <ligand>
        <name>Mg(2+)</name>
        <dbReference type="ChEBI" id="CHEBI:18420"/>
    </ligand>
</feature>
<feature type="binding site" evidence="1">
    <location>
        <position position="60"/>
    </location>
    <ligand>
        <name>Mg(2+)</name>
        <dbReference type="ChEBI" id="CHEBI:18420"/>
    </ligand>
</feature>
<comment type="function">
    <text evidence="1">Transfers the 4'-phosphopantetheine moiety from coenzyme A to a Ser of acyl-carrier-protein.</text>
</comment>
<comment type="catalytic activity">
    <reaction evidence="1">
        <text>apo-[ACP] + CoA = holo-[ACP] + adenosine 3',5'-bisphosphate + H(+)</text>
        <dbReference type="Rhea" id="RHEA:12068"/>
        <dbReference type="Rhea" id="RHEA-COMP:9685"/>
        <dbReference type="Rhea" id="RHEA-COMP:9690"/>
        <dbReference type="ChEBI" id="CHEBI:15378"/>
        <dbReference type="ChEBI" id="CHEBI:29999"/>
        <dbReference type="ChEBI" id="CHEBI:57287"/>
        <dbReference type="ChEBI" id="CHEBI:58343"/>
        <dbReference type="ChEBI" id="CHEBI:64479"/>
        <dbReference type="EC" id="2.7.8.7"/>
    </reaction>
</comment>
<comment type="cofactor">
    <cofactor evidence="1">
        <name>Mg(2+)</name>
        <dbReference type="ChEBI" id="CHEBI:18420"/>
    </cofactor>
</comment>
<comment type="subcellular location">
    <subcellularLocation>
        <location evidence="1">Cytoplasm</location>
    </subcellularLocation>
</comment>
<comment type="similarity">
    <text evidence="1">Belongs to the P-Pant transferase superfamily. AcpS family.</text>
</comment>
<gene>
    <name evidence="1" type="primary">acpS</name>
    <name type="ordered locus">Mmwyl1_1249</name>
</gene>
<accession>A6VUP9</accession>